<sequence length="356" mass="38732">MHKVLAIETSCDETSVSIVSNSGDIYKIHSNIVASQIEDHSKWGGVVPELAARKHLELLPFVLEQALEESKIRIEKIDVIASTVTPGLVGCLRVGSITARSLCTLYSKPFLGIHHLEGHLSSILFSKNYPKPPFLTLLVSGGHTELIKVGERRKMQRLGRSYDDAAGEAFDKVGRLLGLSYPGGPAIAKIAKKGNASKFNLPKCKISDKEGGFLKYDFSFSGLKTAVLRLVEKINLNGDEIPIPDIAASFERVVAEVLVERTIKCANDYGLDNIVVVGGVAANDTLRKMMISEACKKSIKVHLAPINLCTDNAAMIGAAALYRLKFKAYESSLKLGISGRLPIDQANTLYENKPPF</sequence>
<accession>Q7V2K6</accession>
<feature type="chain" id="PRO_0000303486" description="tRNA N6-adenosine threonylcarbamoyltransferase">
    <location>
        <begin position="1"/>
        <end position="356"/>
    </location>
</feature>
<feature type="binding site" evidence="1">
    <location>
        <position position="115"/>
    </location>
    <ligand>
        <name>Fe cation</name>
        <dbReference type="ChEBI" id="CHEBI:24875"/>
    </ligand>
</feature>
<feature type="binding site" evidence="1">
    <location>
        <position position="119"/>
    </location>
    <ligand>
        <name>Fe cation</name>
        <dbReference type="ChEBI" id="CHEBI:24875"/>
    </ligand>
</feature>
<feature type="binding site" evidence="1">
    <location>
        <begin position="138"/>
        <end position="142"/>
    </location>
    <ligand>
        <name>substrate</name>
    </ligand>
</feature>
<feature type="binding site" evidence="1">
    <location>
        <position position="171"/>
    </location>
    <ligand>
        <name>substrate</name>
    </ligand>
</feature>
<feature type="binding site" evidence="1">
    <location>
        <position position="184"/>
    </location>
    <ligand>
        <name>substrate</name>
    </ligand>
</feature>
<feature type="binding site" evidence="1">
    <location>
        <position position="283"/>
    </location>
    <ligand>
        <name>substrate</name>
    </ligand>
</feature>
<feature type="binding site" evidence="1">
    <location>
        <position position="311"/>
    </location>
    <ligand>
        <name>Fe cation</name>
        <dbReference type="ChEBI" id="CHEBI:24875"/>
    </ligand>
</feature>
<name>TSAD_PROMP</name>
<protein>
    <recommendedName>
        <fullName evidence="1">tRNA N6-adenosine threonylcarbamoyltransferase</fullName>
        <ecNumber evidence="1">2.3.1.234</ecNumber>
    </recommendedName>
    <alternativeName>
        <fullName evidence="1">N6-L-threonylcarbamoyladenine synthase</fullName>
        <shortName evidence="1">t(6)A synthase</shortName>
    </alternativeName>
    <alternativeName>
        <fullName evidence="1">t(6)A37 threonylcarbamoyladenosine biosynthesis protein TsaD</fullName>
    </alternativeName>
    <alternativeName>
        <fullName evidence="1">tRNA threonylcarbamoyladenosine biosynthesis protein TsaD</fullName>
    </alternativeName>
</protein>
<evidence type="ECO:0000255" key="1">
    <source>
        <dbReference type="HAMAP-Rule" id="MF_01445"/>
    </source>
</evidence>
<gene>
    <name evidence="1" type="primary">tsaD</name>
    <name type="synonym">gcp</name>
    <name type="ordered locus">PMM0470</name>
</gene>
<proteinExistence type="inferred from homology"/>
<dbReference type="EC" id="2.3.1.234" evidence="1"/>
<dbReference type="EMBL" id="BX548174">
    <property type="protein sequence ID" value="CAE18929.1"/>
    <property type="molecule type" value="Genomic_DNA"/>
</dbReference>
<dbReference type="RefSeq" id="WP_011132106.1">
    <property type="nucleotide sequence ID" value="NC_005072.1"/>
</dbReference>
<dbReference type="SMR" id="Q7V2K6"/>
<dbReference type="STRING" id="59919.PMM0470"/>
<dbReference type="KEGG" id="pmm:PMM0470"/>
<dbReference type="eggNOG" id="COG0533">
    <property type="taxonomic scope" value="Bacteria"/>
</dbReference>
<dbReference type="HOGENOM" id="CLU_023208_0_2_3"/>
<dbReference type="OrthoDB" id="9806197at2"/>
<dbReference type="Proteomes" id="UP000001026">
    <property type="component" value="Chromosome"/>
</dbReference>
<dbReference type="GO" id="GO:0005737">
    <property type="term" value="C:cytoplasm"/>
    <property type="evidence" value="ECO:0007669"/>
    <property type="project" value="UniProtKB-SubCell"/>
</dbReference>
<dbReference type="GO" id="GO:0005506">
    <property type="term" value="F:iron ion binding"/>
    <property type="evidence" value="ECO:0007669"/>
    <property type="project" value="UniProtKB-UniRule"/>
</dbReference>
<dbReference type="GO" id="GO:0061711">
    <property type="term" value="F:N(6)-L-threonylcarbamoyladenine synthase activity"/>
    <property type="evidence" value="ECO:0007669"/>
    <property type="project" value="UniProtKB-EC"/>
</dbReference>
<dbReference type="GO" id="GO:0002949">
    <property type="term" value="P:tRNA threonylcarbamoyladenosine modification"/>
    <property type="evidence" value="ECO:0007669"/>
    <property type="project" value="UniProtKB-UniRule"/>
</dbReference>
<dbReference type="CDD" id="cd24133">
    <property type="entry name" value="ASKHA_NBD_TsaD_bac"/>
    <property type="match status" value="1"/>
</dbReference>
<dbReference type="FunFam" id="3.30.420.40:FF:000012">
    <property type="entry name" value="tRNA N6-adenosine threonylcarbamoyltransferase"/>
    <property type="match status" value="1"/>
</dbReference>
<dbReference type="FunFam" id="3.30.420.40:FF:000040">
    <property type="entry name" value="tRNA N6-adenosine threonylcarbamoyltransferase"/>
    <property type="match status" value="1"/>
</dbReference>
<dbReference type="Gene3D" id="3.30.420.40">
    <property type="match status" value="2"/>
</dbReference>
<dbReference type="HAMAP" id="MF_01445">
    <property type="entry name" value="TsaD"/>
    <property type="match status" value="1"/>
</dbReference>
<dbReference type="InterPro" id="IPR043129">
    <property type="entry name" value="ATPase_NBD"/>
</dbReference>
<dbReference type="InterPro" id="IPR000905">
    <property type="entry name" value="Gcp-like_dom"/>
</dbReference>
<dbReference type="InterPro" id="IPR017861">
    <property type="entry name" value="KAE1/TsaD"/>
</dbReference>
<dbReference type="InterPro" id="IPR022450">
    <property type="entry name" value="TsaD"/>
</dbReference>
<dbReference type="NCBIfam" id="TIGR00329">
    <property type="entry name" value="gcp_kae1"/>
    <property type="match status" value="1"/>
</dbReference>
<dbReference type="NCBIfam" id="TIGR03723">
    <property type="entry name" value="T6A_TsaD_YgjD"/>
    <property type="match status" value="1"/>
</dbReference>
<dbReference type="PANTHER" id="PTHR11735">
    <property type="entry name" value="TRNA N6-ADENOSINE THREONYLCARBAMOYLTRANSFERASE"/>
    <property type="match status" value="1"/>
</dbReference>
<dbReference type="PANTHER" id="PTHR11735:SF6">
    <property type="entry name" value="TRNA N6-ADENOSINE THREONYLCARBAMOYLTRANSFERASE, MITOCHONDRIAL"/>
    <property type="match status" value="1"/>
</dbReference>
<dbReference type="Pfam" id="PF00814">
    <property type="entry name" value="TsaD"/>
    <property type="match status" value="1"/>
</dbReference>
<dbReference type="PRINTS" id="PR00789">
    <property type="entry name" value="OSIALOPTASE"/>
</dbReference>
<dbReference type="SUPFAM" id="SSF53067">
    <property type="entry name" value="Actin-like ATPase domain"/>
    <property type="match status" value="2"/>
</dbReference>
<keyword id="KW-0012">Acyltransferase</keyword>
<keyword id="KW-0963">Cytoplasm</keyword>
<keyword id="KW-0408">Iron</keyword>
<keyword id="KW-0479">Metal-binding</keyword>
<keyword id="KW-0808">Transferase</keyword>
<keyword id="KW-0819">tRNA processing</keyword>
<comment type="function">
    <text evidence="1">Required for the formation of a threonylcarbamoyl group on adenosine at position 37 (t(6)A37) in tRNAs that read codons beginning with adenine. Is involved in the transfer of the threonylcarbamoyl moiety of threonylcarbamoyl-AMP (TC-AMP) to the N6 group of A37, together with TsaE and TsaB. TsaD likely plays a direct catalytic role in this reaction.</text>
</comment>
<comment type="catalytic activity">
    <reaction evidence="1">
        <text>L-threonylcarbamoyladenylate + adenosine(37) in tRNA = N(6)-L-threonylcarbamoyladenosine(37) in tRNA + AMP + H(+)</text>
        <dbReference type="Rhea" id="RHEA:37059"/>
        <dbReference type="Rhea" id="RHEA-COMP:10162"/>
        <dbReference type="Rhea" id="RHEA-COMP:10163"/>
        <dbReference type="ChEBI" id="CHEBI:15378"/>
        <dbReference type="ChEBI" id="CHEBI:73682"/>
        <dbReference type="ChEBI" id="CHEBI:74411"/>
        <dbReference type="ChEBI" id="CHEBI:74418"/>
        <dbReference type="ChEBI" id="CHEBI:456215"/>
        <dbReference type="EC" id="2.3.1.234"/>
    </reaction>
</comment>
<comment type="cofactor">
    <cofactor evidence="1">
        <name>Fe(2+)</name>
        <dbReference type="ChEBI" id="CHEBI:29033"/>
    </cofactor>
    <text evidence="1">Binds 1 Fe(2+) ion per subunit.</text>
</comment>
<comment type="subcellular location">
    <subcellularLocation>
        <location evidence="1">Cytoplasm</location>
    </subcellularLocation>
</comment>
<comment type="similarity">
    <text evidence="1">Belongs to the KAE1 / TsaD family.</text>
</comment>
<organism>
    <name type="scientific">Prochlorococcus marinus subsp. pastoris (strain CCMP1986 / NIES-2087 / MED4)</name>
    <dbReference type="NCBI Taxonomy" id="59919"/>
    <lineage>
        <taxon>Bacteria</taxon>
        <taxon>Bacillati</taxon>
        <taxon>Cyanobacteriota</taxon>
        <taxon>Cyanophyceae</taxon>
        <taxon>Synechococcales</taxon>
        <taxon>Prochlorococcaceae</taxon>
        <taxon>Prochlorococcus</taxon>
    </lineage>
</organism>
<reference key="1">
    <citation type="journal article" date="2003" name="Nature">
        <title>Genome divergence in two Prochlorococcus ecotypes reflects oceanic niche differentiation.</title>
        <authorList>
            <person name="Rocap G."/>
            <person name="Larimer F.W."/>
            <person name="Lamerdin J.E."/>
            <person name="Malfatti S."/>
            <person name="Chain P."/>
            <person name="Ahlgren N.A."/>
            <person name="Arellano A."/>
            <person name="Coleman M."/>
            <person name="Hauser L."/>
            <person name="Hess W.R."/>
            <person name="Johnson Z.I."/>
            <person name="Land M.L."/>
            <person name="Lindell D."/>
            <person name="Post A.F."/>
            <person name="Regala W."/>
            <person name="Shah M."/>
            <person name="Shaw S.L."/>
            <person name="Steglich C."/>
            <person name="Sullivan M.B."/>
            <person name="Ting C.S."/>
            <person name="Tolonen A."/>
            <person name="Webb E.A."/>
            <person name="Zinser E.R."/>
            <person name="Chisholm S.W."/>
        </authorList>
    </citation>
    <scope>NUCLEOTIDE SEQUENCE [LARGE SCALE GENOMIC DNA]</scope>
    <source>
        <strain>CCMP1986 / NIES-2087 / MED4</strain>
    </source>
</reference>